<organism>
    <name type="scientific">Yersinia pestis bv. Antiqua (strain Antiqua)</name>
    <dbReference type="NCBI Taxonomy" id="360102"/>
    <lineage>
        <taxon>Bacteria</taxon>
        <taxon>Pseudomonadati</taxon>
        <taxon>Pseudomonadota</taxon>
        <taxon>Gammaproteobacteria</taxon>
        <taxon>Enterobacterales</taxon>
        <taxon>Yersiniaceae</taxon>
        <taxon>Yersinia</taxon>
    </lineage>
</organism>
<reference key="1">
    <citation type="journal article" date="2006" name="J. Bacteriol.">
        <title>Complete genome sequence of Yersinia pestis strains Antiqua and Nepal516: evidence of gene reduction in an emerging pathogen.</title>
        <authorList>
            <person name="Chain P.S.G."/>
            <person name="Hu P."/>
            <person name="Malfatti S.A."/>
            <person name="Radnedge L."/>
            <person name="Larimer F."/>
            <person name="Vergez L.M."/>
            <person name="Worsham P."/>
            <person name="Chu M.C."/>
            <person name="Andersen G.L."/>
        </authorList>
    </citation>
    <scope>NUCLEOTIDE SEQUENCE [LARGE SCALE GENOMIC DNA]</scope>
    <source>
        <strain>Antiqua</strain>
    </source>
</reference>
<sequence length="441" mass="49355">MKERSTELVQGFRHSVPYINAHRGKTFVVMLGGEAIEHENFSSIVNDIGLLHSLGIRLVVVYGARPQIDSNLADHNYEPIYHKHTRVTDARTLEMVKQAAGLLQLDITARLSMSLNNTPLQGAHINVVSGNFIIAQPLGVDDGVDYCHSGRIRRIDEEAIHRQLDNGAIVLLGPVAVSVTGESFNLTSEEVATQLAIKLKAEKMIGFCSSQGVTDSEGNIISELFPNDAQKRIEDLEQDGDYNSGTVRFLRGAVKACRSGVRRSHLLSYQEDGALIQELFSRDGIGTQIVMESAEQVRRATINDIGGILELIRPLEQQGILVRRSREQLEMEIDKFTIIERDNLTIACAALYPFPDEHIGEMACVAVHPDYRSSSRGEMLLNRITNQARQMGLKKLFVLTTRSIHWFQERGFTPAEVDVLPIQKQELYNYQRRSKILLADL</sequence>
<name>ARGA_YERPA</name>
<gene>
    <name evidence="1" type="primary">argA</name>
    <name type="ordered locus">YPA_0494</name>
</gene>
<comment type="catalytic activity">
    <reaction evidence="1">
        <text>L-glutamate + acetyl-CoA = N-acetyl-L-glutamate + CoA + H(+)</text>
        <dbReference type="Rhea" id="RHEA:24292"/>
        <dbReference type="ChEBI" id="CHEBI:15378"/>
        <dbReference type="ChEBI" id="CHEBI:29985"/>
        <dbReference type="ChEBI" id="CHEBI:44337"/>
        <dbReference type="ChEBI" id="CHEBI:57287"/>
        <dbReference type="ChEBI" id="CHEBI:57288"/>
        <dbReference type="EC" id="2.3.1.1"/>
    </reaction>
</comment>
<comment type="pathway">
    <text evidence="1">Amino-acid biosynthesis; L-arginine biosynthesis; N(2)-acetyl-L-ornithine from L-glutamate: step 1/4.</text>
</comment>
<comment type="subunit">
    <text evidence="1">Homohexamer.</text>
</comment>
<comment type="subcellular location">
    <subcellularLocation>
        <location evidence="1">Cytoplasm</location>
    </subcellularLocation>
</comment>
<comment type="similarity">
    <text evidence="1">Belongs to the acetyltransferase family. ArgA subfamily.</text>
</comment>
<protein>
    <recommendedName>
        <fullName evidence="1">Amino-acid acetyltransferase</fullName>
        <ecNumber evidence="1">2.3.1.1</ecNumber>
    </recommendedName>
    <alternativeName>
        <fullName evidence="1">N-acetylglutamate synthase</fullName>
        <shortName evidence="1">AGS</shortName>
        <shortName evidence="1">NAGS</shortName>
    </alternativeName>
</protein>
<keyword id="KW-0012">Acyltransferase</keyword>
<keyword id="KW-0028">Amino-acid biosynthesis</keyword>
<keyword id="KW-0055">Arginine biosynthesis</keyword>
<keyword id="KW-0963">Cytoplasm</keyword>
<keyword id="KW-0808">Transferase</keyword>
<accession>Q1CAR0</accession>
<feature type="chain" id="PRO_1000084826" description="Amino-acid acetyltransferase">
    <location>
        <begin position="1"/>
        <end position="441"/>
    </location>
</feature>
<feature type="domain" description="N-acetyltransferase" evidence="1">
    <location>
        <begin position="295"/>
        <end position="434"/>
    </location>
</feature>
<dbReference type="EC" id="2.3.1.1" evidence="1"/>
<dbReference type="EMBL" id="CP000308">
    <property type="protein sequence ID" value="ABG12462.1"/>
    <property type="molecule type" value="Genomic_DNA"/>
</dbReference>
<dbReference type="RefSeq" id="WP_002211624.1">
    <property type="nucleotide sequence ID" value="NZ_CP009906.1"/>
</dbReference>
<dbReference type="SMR" id="Q1CAR0"/>
<dbReference type="GeneID" id="96662393"/>
<dbReference type="KEGG" id="ypa:YPA_0494"/>
<dbReference type="UniPathway" id="UPA00068">
    <property type="reaction ID" value="UER00106"/>
</dbReference>
<dbReference type="Proteomes" id="UP000001971">
    <property type="component" value="Chromosome"/>
</dbReference>
<dbReference type="GO" id="GO:0005737">
    <property type="term" value="C:cytoplasm"/>
    <property type="evidence" value="ECO:0007669"/>
    <property type="project" value="UniProtKB-SubCell"/>
</dbReference>
<dbReference type="GO" id="GO:0004042">
    <property type="term" value="F:L-glutamate N-acetyltransferase activity"/>
    <property type="evidence" value="ECO:0007669"/>
    <property type="project" value="UniProtKB-UniRule"/>
</dbReference>
<dbReference type="GO" id="GO:0006526">
    <property type="term" value="P:L-arginine biosynthetic process"/>
    <property type="evidence" value="ECO:0007669"/>
    <property type="project" value="UniProtKB-UniRule"/>
</dbReference>
<dbReference type="CDD" id="cd04237">
    <property type="entry name" value="AAK_NAGS-ABP"/>
    <property type="match status" value="1"/>
</dbReference>
<dbReference type="CDD" id="cd04301">
    <property type="entry name" value="NAT_SF"/>
    <property type="match status" value="1"/>
</dbReference>
<dbReference type="FunFam" id="3.40.1160.10:FF:000005">
    <property type="entry name" value="Amino-acid acetyltransferase"/>
    <property type="match status" value="1"/>
</dbReference>
<dbReference type="FunFam" id="3.40.630.30:FF:000009">
    <property type="entry name" value="Amino-acid acetyltransferase"/>
    <property type="match status" value="1"/>
</dbReference>
<dbReference type="Gene3D" id="3.40.630.30">
    <property type="match status" value="1"/>
</dbReference>
<dbReference type="Gene3D" id="3.40.1160.10">
    <property type="entry name" value="Acetylglutamate kinase-like"/>
    <property type="match status" value="1"/>
</dbReference>
<dbReference type="HAMAP" id="MF_01105">
    <property type="entry name" value="N_acetyl_glu_synth"/>
    <property type="match status" value="1"/>
</dbReference>
<dbReference type="InterPro" id="IPR036393">
    <property type="entry name" value="AceGlu_kinase-like_sf"/>
</dbReference>
<dbReference type="InterPro" id="IPR016181">
    <property type="entry name" value="Acyl_CoA_acyltransferase"/>
</dbReference>
<dbReference type="InterPro" id="IPR001048">
    <property type="entry name" value="Asp/Glu/Uridylate_kinase"/>
</dbReference>
<dbReference type="InterPro" id="IPR000182">
    <property type="entry name" value="GNAT_dom"/>
</dbReference>
<dbReference type="InterPro" id="IPR033719">
    <property type="entry name" value="NAGS_kin"/>
</dbReference>
<dbReference type="InterPro" id="IPR010167">
    <property type="entry name" value="NH2A_AcTrfase"/>
</dbReference>
<dbReference type="NCBIfam" id="TIGR01890">
    <property type="entry name" value="N-Ac-Glu-synth"/>
    <property type="match status" value="1"/>
</dbReference>
<dbReference type="NCBIfam" id="NF003641">
    <property type="entry name" value="PRK05279.1"/>
    <property type="match status" value="1"/>
</dbReference>
<dbReference type="PANTHER" id="PTHR30602">
    <property type="entry name" value="AMINO-ACID ACETYLTRANSFERASE"/>
    <property type="match status" value="1"/>
</dbReference>
<dbReference type="PANTHER" id="PTHR30602:SF12">
    <property type="entry name" value="AMINO-ACID ACETYLTRANSFERASE NAGS1, CHLOROPLASTIC-RELATED"/>
    <property type="match status" value="1"/>
</dbReference>
<dbReference type="Pfam" id="PF00696">
    <property type="entry name" value="AA_kinase"/>
    <property type="match status" value="1"/>
</dbReference>
<dbReference type="Pfam" id="PF00583">
    <property type="entry name" value="Acetyltransf_1"/>
    <property type="match status" value="1"/>
</dbReference>
<dbReference type="PIRSF" id="PIRSF000423">
    <property type="entry name" value="ArgA"/>
    <property type="match status" value="1"/>
</dbReference>
<dbReference type="SUPFAM" id="SSF55729">
    <property type="entry name" value="Acyl-CoA N-acyltransferases (Nat)"/>
    <property type="match status" value="1"/>
</dbReference>
<dbReference type="SUPFAM" id="SSF53633">
    <property type="entry name" value="Carbamate kinase-like"/>
    <property type="match status" value="1"/>
</dbReference>
<dbReference type="PROSITE" id="PS51186">
    <property type="entry name" value="GNAT"/>
    <property type="match status" value="1"/>
</dbReference>
<proteinExistence type="inferred from homology"/>
<evidence type="ECO:0000255" key="1">
    <source>
        <dbReference type="HAMAP-Rule" id="MF_01105"/>
    </source>
</evidence>